<evidence type="ECO:0000255" key="1"/>
<evidence type="ECO:0000255" key="2">
    <source>
        <dbReference type="PROSITE-ProRule" id="PRU00204"/>
    </source>
</evidence>
<evidence type="ECO:0000269" key="3">
    <source>
    </source>
</evidence>
<evidence type="ECO:0000269" key="4">
    <source>
    </source>
</evidence>
<evidence type="ECO:0000269" key="5">
    <source>
    </source>
</evidence>
<evidence type="ECO:0000303" key="6">
    <source>
    </source>
</evidence>
<evidence type="ECO:0000305" key="7"/>
<evidence type="ECO:0000305" key="8">
    <source>
    </source>
</evidence>
<evidence type="ECO:0000305" key="9">
    <source>
    </source>
</evidence>
<keyword id="KW-0175">Coiled coil</keyword>
<keyword id="KW-0378">Hydrolase</keyword>
<keyword id="KW-0520">NAD</keyword>
<keyword id="KW-0964">Secreted</keyword>
<keyword id="KW-0843">Virulence</keyword>
<protein>
    <recommendedName>
        <fullName evidence="7">NAD(+) hydrolase TirS</fullName>
        <ecNumber evidence="5">3.2.2.6</ecNumber>
    </recommendedName>
    <alternativeName>
        <fullName evidence="7">NADP(+) hydrolase TirS</fullName>
        <ecNumber evidence="5">3.2.2.-</ecNumber>
    </alternativeName>
    <alternativeName>
        <fullName evidence="6">TIR domain-containing protein in S.aureus</fullName>
    </alternativeName>
</protein>
<organism>
    <name type="scientific">Staphylococcus aureus (strain MSSA476)</name>
    <dbReference type="NCBI Taxonomy" id="282459"/>
    <lineage>
        <taxon>Bacteria</taxon>
        <taxon>Bacillati</taxon>
        <taxon>Bacillota</taxon>
        <taxon>Bacilli</taxon>
        <taxon>Bacillales</taxon>
        <taxon>Staphylococcaceae</taxon>
        <taxon>Staphylococcus</taxon>
    </lineage>
</organism>
<feature type="chain" id="PRO_0000449146" description="NAD(+) hydrolase TirS">
    <location>
        <begin position="1"/>
        <end position="280"/>
    </location>
</feature>
<feature type="domain" description="TIR" evidence="2">
    <location>
        <begin position="141"/>
        <end position="275"/>
    </location>
</feature>
<feature type="coiled-coil region" evidence="1">
    <location>
        <begin position="22"/>
        <end position="94"/>
    </location>
</feature>
<feature type="active site" evidence="2 9">
    <location>
        <position position="216"/>
    </location>
</feature>
<feature type="binding site" evidence="2">
    <location>
        <begin position="150"/>
        <end position="151"/>
    </location>
    <ligand>
        <name>NAD(+)</name>
        <dbReference type="ChEBI" id="CHEBI:57540"/>
    </ligand>
</feature>
<feature type="binding site" evidence="2">
    <location>
        <position position="180"/>
    </location>
    <ligand>
        <name>NAD(+)</name>
        <dbReference type="ChEBI" id="CHEBI:57540"/>
    </ligand>
</feature>
<feature type="mutagenesis site" description="Loss of NAD(+) hydrolase activity." evidence="5">
    <original>E</original>
    <variation>A</variation>
    <location>
        <position position="216"/>
    </location>
</feature>
<sequence length="280" mass="32811">MSVLETKLKSQMSKSAKIARNMNKLPDEIDRLRKRIERINKKRKPTSSNIRDLEKSNKQLVTKQQKLADLQVEYTKIEKKINETKINLQKEQSRNQKKLSSMLDKNTKGNEEIMEKLLTNSDQINEISNQIKKAVNQKEIIEYDVFLSHSSLDKEDYVSKISEKLIEKGLKVFEDVKVFEIGKSQTETMNMGILNSRFVVVFLSPNFIESGWSRYEFLSFLNREINEEHVIILPIWHKVSVEDVRAYNPYLVDKYALNTSDFSIEEIVEKIYQVIVNSKN</sequence>
<name>TIRS_STAAS</name>
<dbReference type="EC" id="3.2.2.6" evidence="5"/>
<dbReference type="EC" id="3.2.2.-" evidence="5"/>
<dbReference type="EMBL" id="BX571857">
    <property type="protein sequence ID" value="CAG41810.1"/>
    <property type="molecule type" value="Genomic_DNA"/>
</dbReference>
<dbReference type="RefSeq" id="WP_000114516.1">
    <property type="nucleotide sequence ID" value="NC_002953.3"/>
</dbReference>
<dbReference type="SMR" id="P0DTS9"/>
<dbReference type="KEGG" id="sas:SAS0038"/>
<dbReference type="GO" id="GO:0005576">
    <property type="term" value="C:extracellular region"/>
    <property type="evidence" value="ECO:0007669"/>
    <property type="project" value="UniProtKB-SubCell"/>
</dbReference>
<dbReference type="GO" id="GO:0003953">
    <property type="term" value="F:NAD+ nucleosidase activity"/>
    <property type="evidence" value="ECO:0000314"/>
    <property type="project" value="UniProtKB"/>
</dbReference>
<dbReference type="GO" id="GO:0061809">
    <property type="term" value="F:NAD+ nucleosidase activity, cyclic ADP-ribose generating"/>
    <property type="evidence" value="ECO:0007669"/>
    <property type="project" value="UniProtKB-EC"/>
</dbReference>
<dbReference type="GO" id="GO:0050135">
    <property type="term" value="F:NADP+ nucleosidase activity"/>
    <property type="evidence" value="ECO:0000314"/>
    <property type="project" value="UniProtKB"/>
</dbReference>
<dbReference type="GO" id="GO:0019677">
    <property type="term" value="P:NAD catabolic process"/>
    <property type="evidence" value="ECO:0000314"/>
    <property type="project" value="UniProtKB"/>
</dbReference>
<dbReference type="GO" id="GO:0007165">
    <property type="term" value="P:signal transduction"/>
    <property type="evidence" value="ECO:0007669"/>
    <property type="project" value="InterPro"/>
</dbReference>
<dbReference type="Gene3D" id="3.40.50.10140">
    <property type="entry name" value="Toll/interleukin-1 receptor homology (TIR) domain"/>
    <property type="match status" value="1"/>
</dbReference>
<dbReference type="InterPro" id="IPR000157">
    <property type="entry name" value="TIR_dom"/>
</dbReference>
<dbReference type="InterPro" id="IPR035897">
    <property type="entry name" value="Toll_tir_struct_dom_sf"/>
</dbReference>
<dbReference type="PANTHER" id="PTHR32009:SF39">
    <property type="entry name" value="TIR DOMAIN-CONTAINING PROTEIN"/>
    <property type="match status" value="1"/>
</dbReference>
<dbReference type="PANTHER" id="PTHR32009">
    <property type="entry name" value="TMV RESISTANCE PROTEIN N-LIKE"/>
    <property type="match status" value="1"/>
</dbReference>
<dbReference type="Pfam" id="PF13676">
    <property type="entry name" value="TIR_2"/>
    <property type="match status" value="1"/>
</dbReference>
<dbReference type="SMART" id="SM00255">
    <property type="entry name" value="TIR"/>
    <property type="match status" value="1"/>
</dbReference>
<dbReference type="SUPFAM" id="SSF52200">
    <property type="entry name" value="Toll/Interleukin receptor TIR domain"/>
    <property type="match status" value="1"/>
</dbReference>
<dbReference type="PROSITE" id="PS50104">
    <property type="entry name" value="TIR"/>
    <property type="match status" value="1"/>
</dbReference>
<proteinExistence type="evidence at protein level"/>
<gene>
    <name evidence="6" type="primary">tirS</name>
    <name type="ordered locus">SAS0038</name>
</gene>
<accession>P0DTS9</accession>
<reference key="1">
    <citation type="journal article" date="2004" name="Proc. Natl. Acad. Sci. U.S.A.">
        <title>Complete genomes of two clinical Staphylococcus aureus strains: evidence for the rapid evolution of virulence and drug resistance.</title>
        <authorList>
            <person name="Holden M.T.G."/>
            <person name="Feil E.J."/>
            <person name="Lindsay J.A."/>
            <person name="Peacock S.J."/>
            <person name="Day N.P.J."/>
            <person name="Enright M.C."/>
            <person name="Foster T.J."/>
            <person name="Moore C.E."/>
            <person name="Hurst L."/>
            <person name="Atkin R."/>
            <person name="Barron A."/>
            <person name="Bason N."/>
            <person name="Bentley S.D."/>
            <person name="Chillingworth C."/>
            <person name="Chillingworth T."/>
            <person name="Churcher C."/>
            <person name="Clark L."/>
            <person name="Corton C."/>
            <person name="Cronin A."/>
            <person name="Doggett J."/>
            <person name="Dowd L."/>
            <person name="Feltwell T."/>
            <person name="Hance Z."/>
            <person name="Harris B."/>
            <person name="Hauser H."/>
            <person name="Holroyd S."/>
            <person name="Jagels K."/>
            <person name="James K.D."/>
            <person name="Lennard N."/>
            <person name="Line A."/>
            <person name="Mayes R."/>
            <person name="Moule S."/>
            <person name="Mungall K."/>
            <person name="Ormond D."/>
            <person name="Quail M.A."/>
            <person name="Rabbinowitsch E."/>
            <person name="Rutherford K.M."/>
            <person name="Sanders M."/>
            <person name="Sharp S."/>
            <person name="Simmonds M."/>
            <person name="Stevens K."/>
            <person name="Whitehead S."/>
            <person name="Barrell B.G."/>
            <person name="Spratt B.G."/>
            <person name="Parkhill J."/>
        </authorList>
    </citation>
    <scope>NUCLEOTIDE SEQUENCE [LARGE SCALE GENOMIC DNA]</scope>
    <source>
        <strain>MSSA476</strain>
    </source>
</reference>
<reference key="2">
    <citation type="journal article" date="2014" name="J. Innate Immun.">
        <title>A Staphylococcus aureus TIR domain protein virulence factor blocks TLR2-mediated NF-kappaB signaling.</title>
        <authorList>
            <person name="Askarian F."/>
            <person name="van Sorge N.M."/>
            <person name="Sangvik M."/>
            <person name="Beasley F.C."/>
            <person name="Henriksen J.R."/>
            <person name="Sollid J.U."/>
            <person name="van Strijp J.A."/>
            <person name="Nizet V."/>
            <person name="Johannessen M."/>
        </authorList>
    </citation>
    <scope>FUNCTION</scope>
    <scope>SUBCELLULAR LOCATION</scope>
</reference>
<reference key="3">
    <citation type="journal article" date="2017" name="PLoS Pathog.">
        <title>The TIR homologue lies near resistance genes in Staphylococcus aureus, coupling modulation of virulence and antimicrobial susceptibility.</title>
        <authorList>
            <person name="Patot S."/>
            <person name="Imbert P.R."/>
            <person name="Baude J."/>
            <person name="Martins Simoes P."/>
            <person name="Campergue J.B."/>
            <person name="Louche A."/>
            <person name="Nijland R."/>
            <person name="Bes M."/>
            <person name="Tristan A."/>
            <person name="Laurent F."/>
            <person name="Fischer A."/>
            <person name="Schrenzel J."/>
            <person name="Vandenesch F."/>
            <person name="Salcedo S.P."/>
            <person name="Francois P."/>
            <person name="Lina G."/>
        </authorList>
    </citation>
    <scope>FUNCTION</scope>
</reference>
<reference key="4">
    <citation type="journal article" date="2018" name="Curr. Biol.">
        <title>TIR domain proteins are an ancient family of NAD+-consuming enzymes.</title>
        <authorList>
            <person name="Essuman K."/>
            <person name="Summers D.W."/>
            <person name="Sasaki Y."/>
            <person name="Mao X."/>
            <person name="Yim A.K.Y."/>
            <person name="DiAntonio A."/>
            <person name="Milbrandt J."/>
        </authorList>
    </citation>
    <scope>FUNCTION</scope>
    <scope>CATALYTIC ACTIVITY</scope>
    <scope>BIOPHYSICOCHEMICAL PROPERTIES</scope>
    <scope>MUTAGENESIS OF GLU-216</scope>
</reference>
<comment type="function">
    <text evidence="3 4 5">Virulence factor that suppresses host Toll-like receptor 2 (TLR2)-mediated NF-kappa-B signaling upon infection (PubMed:24481289, PubMed:28060920). NAD(+) hydrolase (NADase) that catalyzes cleavage of NAD(+) into ADP-D-ribose (ADPR) and nicotinamide (PubMed:29395922). Also able to hydrolyze NADP(+), but not other NAD(+)-related molecules (PubMed:29395922). Able to reduce NAD(+) levels in host cells (PubMed:29395922).</text>
</comment>
<comment type="catalytic activity">
    <reaction evidence="5">
        <text>NAD(+) + H2O = ADP-D-ribose + nicotinamide + H(+)</text>
        <dbReference type="Rhea" id="RHEA:16301"/>
        <dbReference type="ChEBI" id="CHEBI:15377"/>
        <dbReference type="ChEBI" id="CHEBI:15378"/>
        <dbReference type="ChEBI" id="CHEBI:17154"/>
        <dbReference type="ChEBI" id="CHEBI:57540"/>
        <dbReference type="ChEBI" id="CHEBI:57967"/>
        <dbReference type="EC" id="3.2.2.6"/>
    </reaction>
    <physiologicalReaction direction="left-to-right" evidence="5">
        <dbReference type="Rhea" id="RHEA:16302"/>
    </physiologicalReaction>
</comment>
<comment type="catalytic activity">
    <reaction evidence="5">
        <text>NADP(+) + H2O = ADP-D-ribose 2'-phosphate + nicotinamide + H(+)</text>
        <dbReference type="Rhea" id="RHEA:19849"/>
        <dbReference type="ChEBI" id="CHEBI:15377"/>
        <dbReference type="ChEBI" id="CHEBI:15378"/>
        <dbReference type="ChEBI" id="CHEBI:17154"/>
        <dbReference type="ChEBI" id="CHEBI:58349"/>
        <dbReference type="ChEBI" id="CHEBI:58673"/>
    </reaction>
    <physiologicalReaction direction="left-to-right" evidence="5">
        <dbReference type="Rhea" id="RHEA:19850"/>
    </physiologicalReaction>
</comment>
<comment type="biophysicochemical properties">
    <kinetics>
        <KM evidence="5">490 uM for NAD(+)</KM>
    </kinetics>
</comment>
<comment type="subcellular location">
    <subcellularLocation>
        <location evidence="8">Secreted</location>
    </subcellularLocation>
</comment>
<comment type="domain">
    <text evidence="2">The TIR domain mediates NAD(+) hydrolase (NADase) activity. Self-association of TIR domains is required for NADase activity.</text>
</comment>